<dbReference type="EMBL" id="AB028622">
    <property type="protein sequence ID" value="BAB01373.1"/>
    <property type="status" value="ALT_SEQ"/>
    <property type="molecule type" value="Genomic_DNA"/>
</dbReference>
<dbReference type="EMBL" id="CP002686">
    <property type="protein sequence ID" value="AEE76568.1"/>
    <property type="status" value="ALT_SEQ"/>
    <property type="molecule type" value="Genomic_DNA"/>
</dbReference>
<dbReference type="RefSeq" id="NP_188832.1">
    <property type="nucleotide sequence ID" value="NM_113090.2"/>
</dbReference>
<dbReference type="SMR" id="Q9LRL7"/>
<dbReference type="PaxDb" id="3702-AT3G21940.1"/>
<dbReference type="GeneID" id="821751"/>
<dbReference type="KEGG" id="ath:AT3G21940"/>
<dbReference type="Araport" id="AT3G21940"/>
<dbReference type="TAIR" id="AT3G21940"/>
<dbReference type="eggNOG" id="ENOG502QPWH">
    <property type="taxonomic scope" value="Eukaryota"/>
</dbReference>
<dbReference type="HOGENOM" id="CLU_000288_35_0_1"/>
<dbReference type="InParanoid" id="Q9LRL7"/>
<dbReference type="OrthoDB" id="696781at2759"/>
<dbReference type="PhylomeDB" id="Q9LRL7"/>
<dbReference type="Proteomes" id="UP000006548">
    <property type="component" value="Chromosome 3"/>
</dbReference>
<dbReference type="ExpressionAtlas" id="Q9LRL7">
    <property type="expression patterns" value="baseline and differential"/>
</dbReference>
<dbReference type="GO" id="GO:0005576">
    <property type="term" value="C:extracellular region"/>
    <property type="evidence" value="ECO:0007669"/>
    <property type="project" value="UniProtKB-SubCell"/>
</dbReference>
<dbReference type="CDD" id="cd23509">
    <property type="entry name" value="Gnk2-like"/>
    <property type="match status" value="2"/>
</dbReference>
<dbReference type="Gene3D" id="3.30.430.20">
    <property type="entry name" value="Gnk2 domain, C-X8-C-X2-C motif"/>
    <property type="match status" value="2"/>
</dbReference>
<dbReference type="InterPro" id="IPR050581">
    <property type="entry name" value="CRR_secretory_protein"/>
</dbReference>
<dbReference type="InterPro" id="IPR002902">
    <property type="entry name" value="GNK2"/>
</dbReference>
<dbReference type="InterPro" id="IPR038408">
    <property type="entry name" value="GNK2_sf"/>
</dbReference>
<dbReference type="PANTHER" id="PTHR32411:SF54">
    <property type="entry name" value="CYSTEINE-RICH REPEAT SECRETORY PROTEIN 29-RELATED"/>
    <property type="match status" value="1"/>
</dbReference>
<dbReference type="PANTHER" id="PTHR32411">
    <property type="entry name" value="CYSTEINE-RICH REPEAT SECRETORY PROTEIN 38-RELATED"/>
    <property type="match status" value="1"/>
</dbReference>
<dbReference type="Pfam" id="PF01657">
    <property type="entry name" value="Stress-antifung"/>
    <property type="match status" value="2"/>
</dbReference>
<dbReference type="PROSITE" id="PS51473">
    <property type="entry name" value="GNK2"/>
    <property type="match status" value="2"/>
</dbReference>
<evidence type="ECO:0000255" key="1"/>
<evidence type="ECO:0000255" key="2">
    <source>
        <dbReference type="PROSITE-ProRule" id="PRU00806"/>
    </source>
</evidence>
<evidence type="ECO:0000305" key="3"/>
<keyword id="KW-1185">Reference proteome</keyword>
<keyword id="KW-0677">Repeat</keyword>
<keyword id="KW-0964">Secreted</keyword>
<keyword id="KW-0732">Signal</keyword>
<gene>
    <name type="primary">CRRSP22</name>
    <name type="ordered locus">At3g21940</name>
    <name type="ORF">MZN24.8</name>
</gene>
<accession>Q9LRL7</accession>
<accession>F4IYW6</accession>
<sequence>MSSSSASKLLGSVLVFAMISVQIVFIHCVMSLNETNSLNQTNVYLHHICINSQGTYKPGSPYEENLNRVIRAISITISNYGFVHGSNGDAPNTVFGKLQCRGDSYLSKCRSCLTTAFSELRGRCPKNKGRIIWYDNCLLEISPINSLGKIDYEYNFYMYNEKDVNGDTNLFNKNTRALLYRLKEKATSKENNNGKQDLPEIGGKRLGMKMLYATGEKSLRTMKLYGMVQCTKDLSIKDCIVCLNWIIAKLPTCCSNKQGGRVLSTSCNFRYELYRFVKT</sequence>
<name>CRR22_ARATH</name>
<proteinExistence type="uncertain"/>
<feature type="signal peptide" evidence="1">
    <location>
        <begin position="1"/>
        <end position="31"/>
    </location>
</feature>
<feature type="chain" id="PRO_0000296150" description="Putative cysteine-rich repeat secretory protein 22">
    <location>
        <begin position="32"/>
        <end position="279"/>
    </location>
</feature>
<feature type="domain" description="Gnk2-homologous 1" evidence="2">
    <location>
        <begin position="44"/>
        <end position="146"/>
    </location>
</feature>
<feature type="domain" description="Gnk2-homologous 2" evidence="2">
    <location>
        <begin position="152"/>
        <end position="276"/>
    </location>
</feature>
<reference key="1">
    <citation type="journal article" date="2000" name="DNA Res.">
        <title>Structural analysis of Arabidopsis thaliana chromosome 3. I. Sequence features of the regions of 4,504,864 bp covered by sixty P1 and TAC clones.</title>
        <authorList>
            <person name="Sato S."/>
            <person name="Nakamura Y."/>
            <person name="Kaneko T."/>
            <person name="Katoh T."/>
            <person name="Asamizu E."/>
            <person name="Tabata S."/>
        </authorList>
    </citation>
    <scope>NUCLEOTIDE SEQUENCE [LARGE SCALE GENOMIC DNA]</scope>
    <source>
        <strain>cv. Columbia</strain>
    </source>
</reference>
<reference key="2">
    <citation type="journal article" date="2017" name="Plant J.">
        <title>Araport11: a complete reannotation of the Arabidopsis thaliana reference genome.</title>
        <authorList>
            <person name="Cheng C.Y."/>
            <person name="Krishnakumar V."/>
            <person name="Chan A.P."/>
            <person name="Thibaud-Nissen F."/>
            <person name="Schobel S."/>
            <person name="Town C.D."/>
        </authorList>
    </citation>
    <scope>GENOME REANNOTATION</scope>
    <source>
        <strain>cv. Columbia</strain>
    </source>
</reference>
<reference key="3">
    <citation type="journal article" date="2001" name="Plant Physiol.">
        <title>A superfamily of proteins with novel cysteine-rich repeats.</title>
        <authorList>
            <person name="Chen Z."/>
        </authorList>
    </citation>
    <scope>GENE FAMILY ORGANIZATION</scope>
    <scope>NOMENCLATURE</scope>
</reference>
<comment type="subcellular location">
    <subcellularLocation>
        <location evidence="3">Secreted</location>
    </subcellularLocation>
</comment>
<comment type="similarity">
    <text evidence="3">Belongs to the cysteine-rich repeat secretory protein family.</text>
</comment>
<comment type="caution">
    <text evidence="3">Could be the product of a pseudogene.</text>
</comment>
<comment type="sequence caution" evidence="3">
    <conflict type="erroneous gene model prediction">
        <sequence resource="EMBL-CDS" id="AEE76568"/>
    </conflict>
</comment>
<comment type="sequence caution" evidence="3">
    <conflict type="frameshift">
        <sequence resource="EMBL-CDS" id="AEE76568"/>
    </conflict>
</comment>
<comment type="sequence caution" evidence="3">
    <conflict type="erroneous gene model prediction">
        <sequence resource="EMBL-CDS" id="BAB01373"/>
    </conflict>
</comment>
<comment type="sequence caution" evidence="3">
    <conflict type="frameshift">
        <sequence resource="EMBL-CDS" id="BAB01373"/>
    </conflict>
</comment>
<organism>
    <name type="scientific">Arabidopsis thaliana</name>
    <name type="common">Mouse-ear cress</name>
    <dbReference type="NCBI Taxonomy" id="3702"/>
    <lineage>
        <taxon>Eukaryota</taxon>
        <taxon>Viridiplantae</taxon>
        <taxon>Streptophyta</taxon>
        <taxon>Embryophyta</taxon>
        <taxon>Tracheophyta</taxon>
        <taxon>Spermatophyta</taxon>
        <taxon>Magnoliopsida</taxon>
        <taxon>eudicotyledons</taxon>
        <taxon>Gunneridae</taxon>
        <taxon>Pentapetalae</taxon>
        <taxon>rosids</taxon>
        <taxon>malvids</taxon>
        <taxon>Brassicales</taxon>
        <taxon>Brassicaceae</taxon>
        <taxon>Camelineae</taxon>
        <taxon>Arabidopsis</taxon>
    </lineage>
</organism>
<protein>
    <recommendedName>
        <fullName>Putative cysteine-rich repeat secretory protein 22</fullName>
    </recommendedName>
</protein>